<sequence length="55" mass="6218">MVKLSKEAKQRLQQLFKGGQFAIRWGFIPLVIYLGFKRGADPGMPEPTVLSLLWG</sequence>
<accession>A1XQS2</accession>
<protein>
    <recommendedName>
        <fullName>Mitochondrial import receptor subunit TOM7 homolog</fullName>
    </recommendedName>
    <alternativeName>
        <fullName>Translocase of outer membrane 7 kDa subunit homolog</fullName>
    </alternativeName>
</protein>
<evidence type="ECO:0000250" key="1"/>
<evidence type="ECO:0000255" key="2"/>
<evidence type="ECO:0000305" key="3"/>
<dbReference type="EMBL" id="DQ629143">
    <property type="protein sequence ID" value="ABK55628.1"/>
    <property type="molecule type" value="mRNA"/>
</dbReference>
<dbReference type="RefSeq" id="NP_001090936.1">
    <property type="nucleotide sequence ID" value="NM_001097467.1"/>
</dbReference>
<dbReference type="SMR" id="A1XQS2"/>
<dbReference type="FunCoup" id="A1XQS2">
    <property type="interactions" value="445"/>
</dbReference>
<dbReference type="STRING" id="9823.ENSSSCP00000016311"/>
<dbReference type="PaxDb" id="9823-ENSSSCP00000016311"/>
<dbReference type="PeptideAtlas" id="A1XQS2"/>
<dbReference type="Ensembl" id="ENSSSCT00000016759.5">
    <property type="protein sequence ID" value="ENSSSCP00000016311.2"/>
    <property type="gene ID" value="ENSSSCG00000015384.5"/>
</dbReference>
<dbReference type="Ensembl" id="ENSSSCT00015107881.1">
    <property type="protein sequence ID" value="ENSSSCP00015045662.1"/>
    <property type="gene ID" value="ENSSSCG00015079497.1"/>
</dbReference>
<dbReference type="Ensembl" id="ENSSSCT00025076532.1">
    <property type="protein sequence ID" value="ENSSSCP00025033182.1"/>
    <property type="gene ID" value="ENSSSCG00025055951.1"/>
</dbReference>
<dbReference type="Ensembl" id="ENSSSCT00030100547.1">
    <property type="protein sequence ID" value="ENSSSCP00030046357.1"/>
    <property type="gene ID" value="ENSSSCG00030071803.1"/>
</dbReference>
<dbReference type="Ensembl" id="ENSSSCT00035062164.1">
    <property type="protein sequence ID" value="ENSSSCP00035025091.1"/>
    <property type="gene ID" value="ENSSSCG00035046741.1"/>
</dbReference>
<dbReference type="Ensembl" id="ENSSSCT00040022337.1">
    <property type="protein sequence ID" value="ENSSSCP00040009350.1"/>
    <property type="gene ID" value="ENSSSCG00040016608.1"/>
</dbReference>
<dbReference type="Ensembl" id="ENSSSCT00045060659.1">
    <property type="protein sequence ID" value="ENSSSCP00045042606.1"/>
    <property type="gene ID" value="ENSSSCG00045035324.1"/>
</dbReference>
<dbReference type="Ensembl" id="ENSSSCT00050073808.1">
    <property type="protein sequence ID" value="ENSSSCP00050031796.1"/>
    <property type="gene ID" value="ENSSSCG00050054138.1"/>
</dbReference>
<dbReference type="Ensembl" id="ENSSSCT00055029599.1">
    <property type="protein sequence ID" value="ENSSSCP00055023560.1"/>
    <property type="gene ID" value="ENSSSCG00055015015.1"/>
</dbReference>
<dbReference type="Ensembl" id="ENSSSCT00060086632.1">
    <property type="protein sequence ID" value="ENSSSCP00060037468.1"/>
    <property type="gene ID" value="ENSSSCG00060063503.1"/>
</dbReference>
<dbReference type="Ensembl" id="ENSSSCT00065061675.1">
    <property type="protein sequence ID" value="ENSSSCP00065026730.1"/>
    <property type="gene ID" value="ENSSSCG00065045071.1"/>
</dbReference>
<dbReference type="Ensembl" id="ENSSSCT00070012893.1">
    <property type="protein sequence ID" value="ENSSSCP00070010613.1"/>
    <property type="gene ID" value="ENSSSCG00070006724.1"/>
</dbReference>
<dbReference type="Ensembl" id="ENSSSCT00085029637">
    <property type="protein sequence ID" value="ENSSSCP00085020455"/>
    <property type="gene ID" value="ENSSSCG00085015609"/>
</dbReference>
<dbReference type="Ensembl" id="ENSSSCT00090040406">
    <property type="protein sequence ID" value="ENSSSCP00090025057"/>
    <property type="gene ID" value="ENSSSCG00090022816"/>
</dbReference>
<dbReference type="Ensembl" id="ENSSSCT00105015281">
    <property type="protein sequence ID" value="ENSSSCP00105011009"/>
    <property type="gene ID" value="ENSSSCG00105007636"/>
</dbReference>
<dbReference type="Ensembl" id="ENSSSCT00110065077">
    <property type="protein sequence ID" value="ENSSSCP00110045717"/>
    <property type="gene ID" value="ENSSSCG00110034187"/>
</dbReference>
<dbReference type="Ensembl" id="ENSSSCT00115015153">
    <property type="protein sequence ID" value="ENSSSCP00115014305"/>
    <property type="gene ID" value="ENSSSCG00115008696"/>
</dbReference>
<dbReference type="Ensembl" id="ENSSSCT00130006498">
    <property type="protein sequence ID" value="ENSSSCP00130004282"/>
    <property type="gene ID" value="ENSSSCG00130003515"/>
</dbReference>
<dbReference type="GeneID" id="100037982"/>
<dbReference type="KEGG" id="ssc:100037982"/>
<dbReference type="CTD" id="54543"/>
<dbReference type="VGNC" id="VGNC:107175">
    <property type="gene designation" value="TOMM7"/>
</dbReference>
<dbReference type="eggNOG" id="KOG4449">
    <property type="taxonomic scope" value="Eukaryota"/>
</dbReference>
<dbReference type="GeneTree" id="ENSGT00390000014833"/>
<dbReference type="HOGENOM" id="CLU_173610_2_1_1"/>
<dbReference type="InParanoid" id="A1XQS2"/>
<dbReference type="OMA" id="LMNLLWQ"/>
<dbReference type="OrthoDB" id="284357at2759"/>
<dbReference type="TreeFam" id="TF106199"/>
<dbReference type="Reactome" id="R-SSC-5205685">
    <property type="pathway name" value="PINK1-PRKN Mediated Mitophagy"/>
</dbReference>
<dbReference type="Proteomes" id="UP000008227">
    <property type="component" value="Chromosome 9"/>
</dbReference>
<dbReference type="Proteomes" id="UP000314985">
    <property type="component" value="Chromosome 9"/>
</dbReference>
<dbReference type="Proteomes" id="UP000694570">
    <property type="component" value="Unplaced"/>
</dbReference>
<dbReference type="Proteomes" id="UP000694571">
    <property type="component" value="Unplaced"/>
</dbReference>
<dbReference type="Proteomes" id="UP000694720">
    <property type="component" value="Unplaced"/>
</dbReference>
<dbReference type="Proteomes" id="UP000694722">
    <property type="component" value="Unplaced"/>
</dbReference>
<dbReference type="Proteomes" id="UP000694723">
    <property type="component" value="Unplaced"/>
</dbReference>
<dbReference type="Proteomes" id="UP000694724">
    <property type="component" value="Unplaced"/>
</dbReference>
<dbReference type="Proteomes" id="UP000694725">
    <property type="component" value="Unplaced"/>
</dbReference>
<dbReference type="Proteomes" id="UP000694726">
    <property type="component" value="Unplaced"/>
</dbReference>
<dbReference type="Proteomes" id="UP000694727">
    <property type="component" value="Unplaced"/>
</dbReference>
<dbReference type="Proteomes" id="UP000694728">
    <property type="component" value="Unplaced"/>
</dbReference>
<dbReference type="Bgee" id="ENSSSCG00000015384">
    <property type="expression patterns" value="Expressed in longissimus lumborum muscle and 44 other cell types or tissues"/>
</dbReference>
<dbReference type="GO" id="GO:0005742">
    <property type="term" value="C:mitochondrial outer membrane translocase complex"/>
    <property type="evidence" value="ECO:0000318"/>
    <property type="project" value="GO_Central"/>
</dbReference>
<dbReference type="GO" id="GO:1903955">
    <property type="term" value="P:positive regulation of protein targeting to mitochondrion"/>
    <property type="evidence" value="ECO:0000318"/>
    <property type="project" value="GO_Central"/>
</dbReference>
<dbReference type="GO" id="GO:1905091">
    <property type="term" value="P:positive regulation of type 2 mitophagy"/>
    <property type="evidence" value="ECO:0007669"/>
    <property type="project" value="Ensembl"/>
</dbReference>
<dbReference type="GO" id="GO:0030150">
    <property type="term" value="P:protein import into mitochondrial matrix"/>
    <property type="evidence" value="ECO:0007669"/>
    <property type="project" value="InterPro"/>
</dbReference>
<dbReference type="GO" id="GO:0031647">
    <property type="term" value="P:regulation of protein stability"/>
    <property type="evidence" value="ECO:0007669"/>
    <property type="project" value="Ensembl"/>
</dbReference>
<dbReference type="InterPro" id="IPR012621">
    <property type="entry name" value="Tom7"/>
</dbReference>
<dbReference type="PANTHER" id="PTHR46722">
    <property type="entry name" value="MITOCHONDRIAL IMPORT RECEPTOR SUBUNIT TOM7 HOMOLOG"/>
    <property type="match status" value="1"/>
</dbReference>
<dbReference type="PANTHER" id="PTHR46722:SF1">
    <property type="entry name" value="MITOCHONDRIAL IMPORT RECEPTOR SUBUNIT TOM7 HOMOLOG"/>
    <property type="match status" value="1"/>
</dbReference>
<dbReference type="Pfam" id="PF08038">
    <property type="entry name" value="Tom7"/>
    <property type="match status" value="1"/>
</dbReference>
<proteinExistence type="inferred from homology"/>
<feature type="chain" id="PRO_0000289989" description="Mitochondrial import receptor subunit TOM7 homolog">
    <location>
        <begin position="1"/>
        <end position="55"/>
    </location>
</feature>
<feature type="topological domain" description="Cytoplasmic" evidence="1">
    <location>
        <begin position="1"/>
        <end position="20"/>
    </location>
</feature>
<feature type="transmembrane region" description="Helical" evidence="2">
    <location>
        <begin position="21"/>
        <end position="36"/>
    </location>
</feature>
<feature type="topological domain" description="Mitochondrial intermembrane" evidence="1">
    <location>
        <begin position="37"/>
        <end position="55"/>
    </location>
</feature>
<reference key="1">
    <citation type="submission" date="2006-05" db="EMBL/GenBank/DDBJ databases">
        <title>Generation and analysis of cDNA sequences derived from a porcine skeletal muscle library.</title>
        <authorList>
            <person name="Cai G."/>
            <person name="Chen Y."/>
            <person name="Wang C."/>
            <person name="Li J."/>
            <person name="Peng G."/>
            <person name="Zhang H."/>
        </authorList>
    </citation>
    <scope>NUCLEOTIDE SEQUENCE [LARGE SCALE MRNA]</scope>
    <source>
        <tissue>Longissimus dorsi muscle</tissue>
    </source>
</reference>
<gene>
    <name type="primary">TOMM7</name>
</gene>
<keyword id="KW-0472">Membrane</keyword>
<keyword id="KW-0496">Mitochondrion</keyword>
<keyword id="KW-1000">Mitochondrion outer membrane</keyword>
<keyword id="KW-0653">Protein transport</keyword>
<keyword id="KW-1185">Reference proteome</keyword>
<keyword id="KW-0812">Transmembrane</keyword>
<keyword id="KW-1133">Transmembrane helix</keyword>
<keyword id="KW-0813">Transport</keyword>
<name>TOM7_PIG</name>
<comment type="function">
    <text evidence="1">Required for assembly and stability of the TOM complex (By similarity). Positive regulator of PRKN translocation to damaged mitochondria. Acts probably by stabilizing PINK1 on the outer membrane of depolarized mitochondria (By similarity).</text>
</comment>
<comment type="subunit">
    <text evidence="1">Forms part of the preprotein translocase complex of the outer mitochondrial membrane (TOM complex) which consists of at least 7 different proteins (TOMM5, TOMM6, TOMM7, TOMM20, TOMM22, TOMM40 and TOMM70).</text>
</comment>
<comment type="subcellular location">
    <subcellularLocation>
        <location evidence="1">Mitochondrion outer membrane</location>
        <topology evidence="1">Single-pass membrane protein</topology>
    </subcellularLocation>
</comment>
<comment type="similarity">
    <text evidence="3">Belongs to the Tom7 family.</text>
</comment>
<organism>
    <name type="scientific">Sus scrofa</name>
    <name type="common">Pig</name>
    <dbReference type="NCBI Taxonomy" id="9823"/>
    <lineage>
        <taxon>Eukaryota</taxon>
        <taxon>Metazoa</taxon>
        <taxon>Chordata</taxon>
        <taxon>Craniata</taxon>
        <taxon>Vertebrata</taxon>
        <taxon>Euteleostomi</taxon>
        <taxon>Mammalia</taxon>
        <taxon>Eutheria</taxon>
        <taxon>Laurasiatheria</taxon>
        <taxon>Artiodactyla</taxon>
        <taxon>Suina</taxon>
        <taxon>Suidae</taxon>
        <taxon>Sus</taxon>
    </lineage>
</organism>